<dbReference type="EC" id="2.7.1.148" evidence="1"/>
<dbReference type="EMBL" id="CP000038">
    <property type="protein sequence ID" value="AAZ88636.1"/>
    <property type="molecule type" value="Genomic_DNA"/>
</dbReference>
<dbReference type="RefSeq" id="WP_001260333.1">
    <property type="nucleotide sequence ID" value="NC_007384.1"/>
</dbReference>
<dbReference type="SMR" id="Q3Z0S6"/>
<dbReference type="GeneID" id="93775273"/>
<dbReference type="KEGG" id="ssn:SSON_1970"/>
<dbReference type="HOGENOM" id="CLU_053057_3_0_6"/>
<dbReference type="UniPathway" id="UPA00056">
    <property type="reaction ID" value="UER00094"/>
</dbReference>
<dbReference type="Proteomes" id="UP000002529">
    <property type="component" value="Chromosome"/>
</dbReference>
<dbReference type="GO" id="GO:0050515">
    <property type="term" value="F:4-(cytidine 5'-diphospho)-2-C-methyl-D-erythritol kinase activity"/>
    <property type="evidence" value="ECO:0007669"/>
    <property type="project" value="UniProtKB-UniRule"/>
</dbReference>
<dbReference type="GO" id="GO:0005524">
    <property type="term" value="F:ATP binding"/>
    <property type="evidence" value="ECO:0007669"/>
    <property type="project" value="UniProtKB-UniRule"/>
</dbReference>
<dbReference type="GO" id="GO:0019288">
    <property type="term" value="P:isopentenyl diphosphate biosynthetic process, methylerythritol 4-phosphate pathway"/>
    <property type="evidence" value="ECO:0007669"/>
    <property type="project" value="UniProtKB-UniRule"/>
</dbReference>
<dbReference type="GO" id="GO:0016114">
    <property type="term" value="P:terpenoid biosynthetic process"/>
    <property type="evidence" value="ECO:0007669"/>
    <property type="project" value="InterPro"/>
</dbReference>
<dbReference type="FunFam" id="3.30.230.10:FF:000022">
    <property type="entry name" value="4-diphosphocytidyl-2-C-methyl-D-erythritol kinase"/>
    <property type="match status" value="1"/>
</dbReference>
<dbReference type="FunFam" id="3.30.70.890:FF:000004">
    <property type="entry name" value="4-diphosphocytidyl-2-C-methyl-D-erythritol kinase"/>
    <property type="match status" value="1"/>
</dbReference>
<dbReference type="Gene3D" id="3.30.230.10">
    <property type="match status" value="1"/>
</dbReference>
<dbReference type="Gene3D" id="3.30.70.890">
    <property type="entry name" value="GHMP kinase, C-terminal domain"/>
    <property type="match status" value="1"/>
</dbReference>
<dbReference type="HAMAP" id="MF_00061">
    <property type="entry name" value="IspE"/>
    <property type="match status" value="1"/>
</dbReference>
<dbReference type="InterPro" id="IPR013750">
    <property type="entry name" value="GHMP_kinase_C_dom"/>
</dbReference>
<dbReference type="InterPro" id="IPR036554">
    <property type="entry name" value="GHMP_kinase_C_sf"/>
</dbReference>
<dbReference type="InterPro" id="IPR006204">
    <property type="entry name" value="GHMP_kinase_N_dom"/>
</dbReference>
<dbReference type="InterPro" id="IPR004424">
    <property type="entry name" value="IspE"/>
</dbReference>
<dbReference type="InterPro" id="IPR020568">
    <property type="entry name" value="Ribosomal_Su5_D2-typ_SF"/>
</dbReference>
<dbReference type="InterPro" id="IPR014721">
    <property type="entry name" value="Ribsml_uS5_D2-typ_fold_subgr"/>
</dbReference>
<dbReference type="NCBIfam" id="TIGR00154">
    <property type="entry name" value="ispE"/>
    <property type="match status" value="1"/>
</dbReference>
<dbReference type="PANTHER" id="PTHR43527">
    <property type="entry name" value="4-DIPHOSPHOCYTIDYL-2-C-METHYL-D-ERYTHRITOL KINASE, CHLOROPLASTIC"/>
    <property type="match status" value="1"/>
</dbReference>
<dbReference type="PANTHER" id="PTHR43527:SF2">
    <property type="entry name" value="4-DIPHOSPHOCYTIDYL-2-C-METHYL-D-ERYTHRITOL KINASE, CHLOROPLASTIC"/>
    <property type="match status" value="1"/>
</dbReference>
<dbReference type="Pfam" id="PF08544">
    <property type="entry name" value="GHMP_kinases_C"/>
    <property type="match status" value="1"/>
</dbReference>
<dbReference type="Pfam" id="PF00288">
    <property type="entry name" value="GHMP_kinases_N"/>
    <property type="match status" value="1"/>
</dbReference>
<dbReference type="PIRSF" id="PIRSF010376">
    <property type="entry name" value="IspE"/>
    <property type="match status" value="1"/>
</dbReference>
<dbReference type="SUPFAM" id="SSF55060">
    <property type="entry name" value="GHMP Kinase, C-terminal domain"/>
    <property type="match status" value="1"/>
</dbReference>
<dbReference type="SUPFAM" id="SSF54211">
    <property type="entry name" value="Ribosomal protein S5 domain 2-like"/>
    <property type="match status" value="1"/>
</dbReference>
<keyword id="KW-0067">ATP-binding</keyword>
<keyword id="KW-0414">Isoprene biosynthesis</keyword>
<keyword id="KW-0418">Kinase</keyword>
<keyword id="KW-0547">Nucleotide-binding</keyword>
<keyword id="KW-1185">Reference proteome</keyword>
<keyword id="KW-0808">Transferase</keyword>
<sequence length="283" mass="30953">MRTQWPSPAKLNLFLYITGQRADGYHTLQTLFQFLDYGDTISIELRDDGDIRLLTPVEGVEHEDNLIVRAARLLMKTAADSGRLPTGSGANISIDKRLPMGGGLGGGSSNAATVLVALNHLWQCGLSMDELAEMGLTLGADVPVFVRGHAAFAEGVGEILTPVDPPEKWYLVAHPGVSIPTPVIFKDPELPRNTPKRSIETLLKCEFSNDCEVIARKRFREVDAVLSWLLEYAPSRLTGTGACVFAEFDTESEARQVLEQAPEWLNGFVAKGVNLSPLHRAML</sequence>
<evidence type="ECO:0000255" key="1">
    <source>
        <dbReference type="HAMAP-Rule" id="MF_00061"/>
    </source>
</evidence>
<protein>
    <recommendedName>
        <fullName evidence="1">4-diphosphocytidyl-2-C-methyl-D-erythritol kinase</fullName>
        <shortName evidence="1">CMK</shortName>
        <ecNumber evidence="1">2.7.1.148</ecNumber>
    </recommendedName>
    <alternativeName>
        <fullName evidence="1">4-(cytidine-5'-diphospho)-2-C-methyl-D-erythritol kinase</fullName>
    </alternativeName>
</protein>
<organism>
    <name type="scientific">Shigella sonnei (strain Ss046)</name>
    <dbReference type="NCBI Taxonomy" id="300269"/>
    <lineage>
        <taxon>Bacteria</taxon>
        <taxon>Pseudomonadati</taxon>
        <taxon>Pseudomonadota</taxon>
        <taxon>Gammaproteobacteria</taxon>
        <taxon>Enterobacterales</taxon>
        <taxon>Enterobacteriaceae</taxon>
        <taxon>Shigella</taxon>
    </lineage>
</organism>
<gene>
    <name evidence="1" type="primary">ispE</name>
    <name type="ordered locus">SSON_1970</name>
</gene>
<comment type="function">
    <text evidence="1">Catalyzes the phosphorylation of the position 2 hydroxy group of 4-diphosphocytidyl-2C-methyl-D-erythritol.</text>
</comment>
<comment type="catalytic activity">
    <reaction evidence="1">
        <text>4-CDP-2-C-methyl-D-erythritol + ATP = 4-CDP-2-C-methyl-D-erythritol 2-phosphate + ADP + H(+)</text>
        <dbReference type="Rhea" id="RHEA:18437"/>
        <dbReference type="ChEBI" id="CHEBI:15378"/>
        <dbReference type="ChEBI" id="CHEBI:30616"/>
        <dbReference type="ChEBI" id="CHEBI:57823"/>
        <dbReference type="ChEBI" id="CHEBI:57919"/>
        <dbReference type="ChEBI" id="CHEBI:456216"/>
        <dbReference type="EC" id="2.7.1.148"/>
    </reaction>
</comment>
<comment type="pathway">
    <text evidence="1">Isoprenoid biosynthesis; isopentenyl diphosphate biosynthesis via DXP pathway; isopentenyl diphosphate from 1-deoxy-D-xylulose 5-phosphate: step 3/6.</text>
</comment>
<comment type="subunit">
    <text evidence="1">Homodimer.</text>
</comment>
<comment type="similarity">
    <text evidence="1">Belongs to the GHMP kinase family. IspE subfamily.</text>
</comment>
<proteinExistence type="inferred from homology"/>
<name>ISPE_SHISS</name>
<accession>Q3Z0S6</accession>
<feature type="chain" id="PRO_0000235131" description="4-diphosphocytidyl-2-C-methyl-D-erythritol kinase">
    <location>
        <begin position="1"/>
        <end position="283"/>
    </location>
</feature>
<feature type="active site" evidence="1">
    <location>
        <position position="10"/>
    </location>
</feature>
<feature type="active site" evidence="1">
    <location>
        <position position="141"/>
    </location>
</feature>
<feature type="binding site" evidence="1">
    <location>
        <begin position="99"/>
        <end position="109"/>
    </location>
    <ligand>
        <name>ATP</name>
        <dbReference type="ChEBI" id="CHEBI:30616"/>
    </ligand>
</feature>
<reference key="1">
    <citation type="journal article" date="2005" name="Nucleic Acids Res.">
        <title>Genome dynamics and diversity of Shigella species, the etiologic agents of bacillary dysentery.</title>
        <authorList>
            <person name="Yang F."/>
            <person name="Yang J."/>
            <person name="Zhang X."/>
            <person name="Chen L."/>
            <person name="Jiang Y."/>
            <person name="Yan Y."/>
            <person name="Tang X."/>
            <person name="Wang J."/>
            <person name="Xiong Z."/>
            <person name="Dong J."/>
            <person name="Xue Y."/>
            <person name="Zhu Y."/>
            <person name="Xu X."/>
            <person name="Sun L."/>
            <person name="Chen S."/>
            <person name="Nie H."/>
            <person name="Peng J."/>
            <person name="Xu J."/>
            <person name="Wang Y."/>
            <person name="Yuan Z."/>
            <person name="Wen Y."/>
            <person name="Yao Z."/>
            <person name="Shen Y."/>
            <person name="Qiang B."/>
            <person name="Hou Y."/>
            <person name="Yu J."/>
            <person name="Jin Q."/>
        </authorList>
    </citation>
    <scope>NUCLEOTIDE SEQUENCE [LARGE SCALE GENOMIC DNA]</scope>
    <source>
        <strain>Ss046</strain>
    </source>
</reference>